<feature type="chain" id="PRO_1000099531" description="UvrABC system protein C">
    <location>
        <begin position="1"/>
        <end position="557"/>
    </location>
</feature>
<feature type="domain" description="GIY-YIG" evidence="1">
    <location>
        <begin position="14"/>
        <end position="89"/>
    </location>
</feature>
<feature type="domain" description="UVR" evidence="1">
    <location>
        <begin position="194"/>
        <end position="229"/>
    </location>
</feature>
<organism>
    <name type="scientific">Thermotoga sp. (strain RQ2)</name>
    <dbReference type="NCBI Taxonomy" id="126740"/>
    <lineage>
        <taxon>Bacteria</taxon>
        <taxon>Thermotogati</taxon>
        <taxon>Thermotogota</taxon>
        <taxon>Thermotogae</taxon>
        <taxon>Thermotogales</taxon>
        <taxon>Thermotogaceae</taxon>
        <taxon>Thermotoga</taxon>
    </lineage>
</organism>
<proteinExistence type="inferred from homology"/>
<protein>
    <recommendedName>
        <fullName evidence="1">UvrABC system protein C</fullName>
        <shortName evidence="1">Protein UvrC</shortName>
    </recommendedName>
    <alternativeName>
        <fullName evidence="1">Excinuclease ABC subunit C</fullName>
    </alternativeName>
</protein>
<keyword id="KW-0963">Cytoplasm</keyword>
<keyword id="KW-0227">DNA damage</keyword>
<keyword id="KW-0228">DNA excision</keyword>
<keyword id="KW-0234">DNA repair</keyword>
<keyword id="KW-0267">Excision nuclease</keyword>
<keyword id="KW-0742">SOS response</keyword>
<gene>
    <name evidence="1" type="primary">uvrC</name>
    <name type="ordered locus">TRQ2_0683</name>
</gene>
<name>UVRC_THESQ</name>
<accession>B1L9N8</accession>
<dbReference type="EMBL" id="CP000969">
    <property type="protein sequence ID" value="ACB09036.1"/>
    <property type="molecule type" value="Genomic_DNA"/>
</dbReference>
<dbReference type="RefSeq" id="WP_012310683.1">
    <property type="nucleotide sequence ID" value="NC_010483.1"/>
</dbReference>
<dbReference type="SMR" id="B1L9N8"/>
<dbReference type="KEGG" id="trq:TRQ2_0683"/>
<dbReference type="HOGENOM" id="CLU_014841_3_2_0"/>
<dbReference type="Proteomes" id="UP000001687">
    <property type="component" value="Chromosome"/>
</dbReference>
<dbReference type="GO" id="GO:0005737">
    <property type="term" value="C:cytoplasm"/>
    <property type="evidence" value="ECO:0007669"/>
    <property type="project" value="UniProtKB-SubCell"/>
</dbReference>
<dbReference type="GO" id="GO:0009380">
    <property type="term" value="C:excinuclease repair complex"/>
    <property type="evidence" value="ECO:0007669"/>
    <property type="project" value="InterPro"/>
</dbReference>
<dbReference type="GO" id="GO:0003677">
    <property type="term" value="F:DNA binding"/>
    <property type="evidence" value="ECO:0007669"/>
    <property type="project" value="UniProtKB-UniRule"/>
</dbReference>
<dbReference type="GO" id="GO:0009381">
    <property type="term" value="F:excinuclease ABC activity"/>
    <property type="evidence" value="ECO:0007669"/>
    <property type="project" value="UniProtKB-UniRule"/>
</dbReference>
<dbReference type="GO" id="GO:0006289">
    <property type="term" value="P:nucleotide-excision repair"/>
    <property type="evidence" value="ECO:0007669"/>
    <property type="project" value="UniProtKB-UniRule"/>
</dbReference>
<dbReference type="GO" id="GO:0009432">
    <property type="term" value="P:SOS response"/>
    <property type="evidence" value="ECO:0007669"/>
    <property type="project" value="UniProtKB-UniRule"/>
</dbReference>
<dbReference type="CDD" id="cd10434">
    <property type="entry name" value="GIY-YIG_UvrC_Cho"/>
    <property type="match status" value="1"/>
</dbReference>
<dbReference type="FunFam" id="3.30.420.340:FF:000004">
    <property type="entry name" value="UvrABC system protein C"/>
    <property type="match status" value="1"/>
</dbReference>
<dbReference type="FunFam" id="3.40.1440.10:FF:000001">
    <property type="entry name" value="UvrABC system protein C"/>
    <property type="match status" value="1"/>
</dbReference>
<dbReference type="Gene3D" id="1.10.150.20">
    <property type="entry name" value="5' to 3' exonuclease, C-terminal subdomain"/>
    <property type="match status" value="1"/>
</dbReference>
<dbReference type="Gene3D" id="3.40.1440.10">
    <property type="entry name" value="GIY-YIG endonuclease"/>
    <property type="match status" value="1"/>
</dbReference>
<dbReference type="Gene3D" id="4.10.860.10">
    <property type="entry name" value="UVR domain"/>
    <property type="match status" value="1"/>
</dbReference>
<dbReference type="Gene3D" id="3.30.420.340">
    <property type="entry name" value="UvrC, RNAse H endonuclease domain"/>
    <property type="match status" value="1"/>
</dbReference>
<dbReference type="HAMAP" id="MF_00203">
    <property type="entry name" value="UvrC"/>
    <property type="match status" value="1"/>
</dbReference>
<dbReference type="InterPro" id="IPR000305">
    <property type="entry name" value="GIY-YIG_endonuc"/>
</dbReference>
<dbReference type="InterPro" id="IPR035901">
    <property type="entry name" value="GIY-YIG_endonuc_sf"/>
</dbReference>
<dbReference type="InterPro" id="IPR047296">
    <property type="entry name" value="GIY-YIG_UvrC_Cho"/>
</dbReference>
<dbReference type="InterPro" id="IPR010994">
    <property type="entry name" value="RuvA_2-like"/>
</dbReference>
<dbReference type="InterPro" id="IPR001943">
    <property type="entry name" value="UVR_dom"/>
</dbReference>
<dbReference type="InterPro" id="IPR036876">
    <property type="entry name" value="UVR_dom_sf"/>
</dbReference>
<dbReference type="InterPro" id="IPR050066">
    <property type="entry name" value="UvrABC_protein_C"/>
</dbReference>
<dbReference type="InterPro" id="IPR004791">
    <property type="entry name" value="UvrC"/>
</dbReference>
<dbReference type="InterPro" id="IPR001162">
    <property type="entry name" value="UvrC_RNase_H_dom"/>
</dbReference>
<dbReference type="InterPro" id="IPR038476">
    <property type="entry name" value="UvrC_RNase_H_dom_sf"/>
</dbReference>
<dbReference type="NCBIfam" id="TIGR00194">
    <property type="entry name" value="uvrC"/>
    <property type="match status" value="1"/>
</dbReference>
<dbReference type="PANTHER" id="PTHR30562:SF1">
    <property type="entry name" value="UVRABC SYSTEM PROTEIN C"/>
    <property type="match status" value="1"/>
</dbReference>
<dbReference type="PANTHER" id="PTHR30562">
    <property type="entry name" value="UVRC/OXIDOREDUCTASE"/>
    <property type="match status" value="1"/>
</dbReference>
<dbReference type="Pfam" id="PF01541">
    <property type="entry name" value="GIY-YIG"/>
    <property type="match status" value="1"/>
</dbReference>
<dbReference type="Pfam" id="PF14520">
    <property type="entry name" value="HHH_5"/>
    <property type="match status" value="1"/>
</dbReference>
<dbReference type="Pfam" id="PF02151">
    <property type="entry name" value="UVR"/>
    <property type="match status" value="1"/>
</dbReference>
<dbReference type="Pfam" id="PF08459">
    <property type="entry name" value="UvrC_RNaseH_dom"/>
    <property type="match status" value="1"/>
</dbReference>
<dbReference type="SMART" id="SM00465">
    <property type="entry name" value="GIYc"/>
    <property type="match status" value="1"/>
</dbReference>
<dbReference type="SUPFAM" id="SSF46600">
    <property type="entry name" value="C-terminal UvrC-binding domain of UvrB"/>
    <property type="match status" value="1"/>
</dbReference>
<dbReference type="SUPFAM" id="SSF82771">
    <property type="entry name" value="GIY-YIG endonuclease"/>
    <property type="match status" value="1"/>
</dbReference>
<dbReference type="SUPFAM" id="SSF47781">
    <property type="entry name" value="RuvA domain 2-like"/>
    <property type="match status" value="1"/>
</dbReference>
<dbReference type="PROSITE" id="PS50164">
    <property type="entry name" value="GIY_YIG"/>
    <property type="match status" value="1"/>
</dbReference>
<dbReference type="PROSITE" id="PS50151">
    <property type="entry name" value="UVR"/>
    <property type="match status" value="1"/>
</dbReference>
<dbReference type="PROSITE" id="PS50165">
    <property type="entry name" value="UVRC"/>
    <property type="match status" value="1"/>
</dbReference>
<comment type="function">
    <text evidence="1">The UvrABC repair system catalyzes the recognition and processing of DNA lesions. UvrC both incises the 5' and 3' sides of the lesion. The N-terminal half is responsible for the 3' incision and the C-terminal half is responsible for the 5' incision.</text>
</comment>
<comment type="subunit">
    <text evidence="1">Interacts with UvrB in an incision complex.</text>
</comment>
<comment type="subcellular location">
    <subcellularLocation>
        <location evidence="1">Cytoplasm</location>
    </subcellularLocation>
</comment>
<comment type="similarity">
    <text evidence="1">Belongs to the UvrC family.</text>
</comment>
<evidence type="ECO:0000255" key="1">
    <source>
        <dbReference type="HAMAP-Rule" id="MF_00203"/>
    </source>
</evidence>
<reference key="1">
    <citation type="journal article" date="2011" name="J. Bacteriol.">
        <title>Genome sequence of Thermotoga sp. strain RQ2, a hyperthermophilic bacterium isolated from a geothermally heated region of the seafloor near Ribeira Quente, the Azores.</title>
        <authorList>
            <person name="Swithers K.S."/>
            <person name="DiPippo J.L."/>
            <person name="Bruce D.C."/>
            <person name="Detter C."/>
            <person name="Tapia R."/>
            <person name="Han S."/>
            <person name="Saunders E."/>
            <person name="Goodwin L.A."/>
            <person name="Han J."/>
            <person name="Woyke T."/>
            <person name="Pitluck S."/>
            <person name="Pennacchio L."/>
            <person name="Nolan M."/>
            <person name="Mikhailova N."/>
            <person name="Lykidis A."/>
            <person name="Land M.L."/>
            <person name="Brettin T."/>
            <person name="Stetter K.O."/>
            <person name="Nelson K.E."/>
            <person name="Gogarten J.P."/>
            <person name="Noll K.M."/>
        </authorList>
    </citation>
    <scope>NUCLEOTIDE SEQUENCE [LARGE SCALE GENOMIC DNA]</scope>
    <source>
        <strain>RQ2</strain>
    </source>
</reference>
<sequence length="557" mass="64798">MKEKIRKKILLASEEPGVYIFKNKGVPIYIGKAKRLSSRLRSYLNPQTEKVFRIVEEADELETIVVMNEREAFILEANLIKKYRPKYNVRLKDTNFYPYIRISDDEIPYVEIVKRKLRDGTYFGPYTSVQFVRNLLEILQKIMGFRTCKSDLKRIKRPCFLYHLGRCIGPCIGNIESHEEAIRKLREFLSGNMEEVFDYLKEKMETHSKMLDFENAAKYRDLLLNLSNVLESQGVVFEENINCDVLVHAHDLFVVLRVRNGYLVGKISFEMEGGSVEDFIREYYISGRGDIPKTLILESDLDEMDYSSLGFEYVGPPRSTTEEDLLEKAKKNLENELKMRGLRKEALEELMKLLNMKDFPYRIEGIDISHLQGKYTVASLVVFEDGFPKKSDYRRYKIEQDHPDDYESIRTVVKRRYSKHPLPNLLFVDGGIGQVNAAIEALKEIGKDCPVVGLAKKEETVVFENREIHLPHDHPVLRLLVQIRDETHRFAVSYHRKRREKESLRSVLDNVPGIGPIRKKKLIEHFGSLENIRSASLEEIARVIGSTEIARRVLDIL</sequence>